<name>ARGB_BURP1</name>
<proteinExistence type="inferred from homology"/>
<gene>
    <name evidence="1" type="primary">argB</name>
    <name type="ordered locus">BURPS1710b_0380</name>
</gene>
<evidence type="ECO:0000255" key="1">
    <source>
        <dbReference type="HAMAP-Rule" id="MF_00082"/>
    </source>
</evidence>
<evidence type="ECO:0000305" key="2"/>
<comment type="function">
    <text evidence="1">Catalyzes the ATP-dependent phosphorylation of N-acetyl-L-glutamate.</text>
</comment>
<comment type="catalytic activity">
    <reaction evidence="1">
        <text>N-acetyl-L-glutamate + ATP = N-acetyl-L-glutamyl 5-phosphate + ADP</text>
        <dbReference type="Rhea" id="RHEA:14629"/>
        <dbReference type="ChEBI" id="CHEBI:30616"/>
        <dbReference type="ChEBI" id="CHEBI:44337"/>
        <dbReference type="ChEBI" id="CHEBI:57936"/>
        <dbReference type="ChEBI" id="CHEBI:456216"/>
        <dbReference type="EC" id="2.7.2.8"/>
    </reaction>
</comment>
<comment type="pathway">
    <text evidence="1">Amino-acid biosynthesis; L-arginine biosynthesis; N(2)-acetyl-L-ornithine from L-glutamate: step 2/4.</text>
</comment>
<comment type="subcellular location">
    <subcellularLocation>
        <location evidence="1">Cytoplasm</location>
    </subcellularLocation>
</comment>
<comment type="similarity">
    <text evidence="1">Belongs to the acetylglutamate kinase family. ArgB subfamily.</text>
</comment>
<comment type="sequence caution" evidence="2">
    <conflict type="erroneous initiation">
        <sequence resource="EMBL-CDS" id="ABA48851"/>
    </conflict>
</comment>
<sequence>MSEPIDLSQISPALKAEILAEALPYIRRYHGKTVVIKYGGNAMTEERLKQGFARDVILLKLVGINPVIVHGGGPQIDQALKKIGKQGTFIQGMRVTDEETMEVVEWVLGGEVQQDIVTLINHFGGHAVGLTGKDGGLIHARKLMMPDRDNPGEYVDIGQVGEVEAINPAVVKALQDDAFIPVISPIGFGEDGLSYNINADLVAGKLATVLNAEKLVMMTNIPGVMDKEGNLLTDLSAREIDALFEDGTISGGMLPKISSALDAAKSGVKSVHIVDGRIEHSVLLEILTEQPFGTMIRSH</sequence>
<dbReference type="EC" id="2.7.2.8" evidence="1"/>
<dbReference type="EMBL" id="CP000124">
    <property type="protein sequence ID" value="ABA48851.1"/>
    <property type="status" value="ALT_INIT"/>
    <property type="molecule type" value="Genomic_DNA"/>
</dbReference>
<dbReference type="RefSeq" id="WP_004200214.1">
    <property type="nucleotide sequence ID" value="NC_007434.1"/>
</dbReference>
<dbReference type="SMR" id="Q3JXA9"/>
<dbReference type="EnsemblBacteria" id="ABA48851">
    <property type="protein sequence ID" value="ABA48851"/>
    <property type="gene ID" value="BURPS1710b_0380"/>
</dbReference>
<dbReference type="GeneID" id="93058708"/>
<dbReference type="KEGG" id="bpm:BURPS1710b_0380"/>
<dbReference type="HOGENOM" id="CLU_053680_0_0_4"/>
<dbReference type="UniPathway" id="UPA00068">
    <property type="reaction ID" value="UER00107"/>
</dbReference>
<dbReference type="Proteomes" id="UP000002700">
    <property type="component" value="Chromosome I"/>
</dbReference>
<dbReference type="GO" id="GO:0005737">
    <property type="term" value="C:cytoplasm"/>
    <property type="evidence" value="ECO:0007669"/>
    <property type="project" value="UniProtKB-SubCell"/>
</dbReference>
<dbReference type="GO" id="GO:0003991">
    <property type="term" value="F:acetylglutamate kinase activity"/>
    <property type="evidence" value="ECO:0007669"/>
    <property type="project" value="UniProtKB-UniRule"/>
</dbReference>
<dbReference type="GO" id="GO:0005524">
    <property type="term" value="F:ATP binding"/>
    <property type="evidence" value="ECO:0007669"/>
    <property type="project" value="UniProtKB-UniRule"/>
</dbReference>
<dbReference type="GO" id="GO:0042450">
    <property type="term" value="P:arginine biosynthetic process via ornithine"/>
    <property type="evidence" value="ECO:0007669"/>
    <property type="project" value="UniProtKB-UniRule"/>
</dbReference>
<dbReference type="GO" id="GO:0006526">
    <property type="term" value="P:L-arginine biosynthetic process"/>
    <property type="evidence" value="ECO:0007669"/>
    <property type="project" value="UniProtKB-UniPathway"/>
</dbReference>
<dbReference type="CDD" id="cd04250">
    <property type="entry name" value="AAK_NAGK-C"/>
    <property type="match status" value="1"/>
</dbReference>
<dbReference type="FunFam" id="3.40.1160.10:FF:000004">
    <property type="entry name" value="Acetylglutamate kinase"/>
    <property type="match status" value="1"/>
</dbReference>
<dbReference type="Gene3D" id="3.40.1160.10">
    <property type="entry name" value="Acetylglutamate kinase-like"/>
    <property type="match status" value="1"/>
</dbReference>
<dbReference type="HAMAP" id="MF_00082">
    <property type="entry name" value="ArgB"/>
    <property type="match status" value="1"/>
</dbReference>
<dbReference type="InterPro" id="IPR036393">
    <property type="entry name" value="AceGlu_kinase-like_sf"/>
</dbReference>
<dbReference type="InterPro" id="IPR004662">
    <property type="entry name" value="AcgluKinase_fam"/>
</dbReference>
<dbReference type="InterPro" id="IPR037528">
    <property type="entry name" value="ArgB"/>
</dbReference>
<dbReference type="InterPro" id="IPR001048">
    <property type="entry name" value="Asp/Glu/Uridylate_kinase"/>
</dbReference>
<dbReference type="InterPro" id="IPR041727">
    <property type="entry name" value="NAGK-C"/>
</dbReference>
<dbReference type="NCBIfam" id="TIGR00761">
    <property type="entry name" value="argB"/>
    <property type="match status" value="1"/>
</dbReference>
<dbReference type="PANTHER" id="PTHR23342">
    <property type="entry name" value="N-ACETYLGLUTAMATE SYNTHASE"/>
    <property type="match status" value="1"/>
</dbReference>
<dbReference type="PANTHER" id="PTHR23342:SF0">
    <property type="entry name" value="N-ACETYLGLUTAMATE SYNTHASE, MITOCHONDRIAL"/>
    <property type="match status" value="1"/>
</dbReference>
<dbReference type="Pfam" id="PF00696">
    <property type="entry name" value="AA_kinase"/>
    <property type="match status" value="1"/>
</dbReference>
<dbReference type="PIRSF" id="PIRSF000728">
    <property type="entry name" value="NAGK"/>
    <property type="match status" value="1"/>
</dbReference>
<dbReference type="SUPFAM" id="SSF53633">
    <property type="entry name" value="Carbamate kinase-like"/>
    <property type="match status" value="1"/>
</dbReference>
<protein>
    <recommendedName>
        <fullName evidence="1">Acetylglutamate kinase</fullName>
        <ecNumber evidence="1">2.7.2.8</ecNumber>
    </recommendedName>
    <alternativeName>
        <fullName evidence="1">N-acetyl-L-glutamate 5-phosphotransferase</fullName>
    </alternativeName>
    <alternativeName>
        <fullName evidence="1">NAG kinase</fullName>
        <shortName evidence="1">NAGK</shortName>
    </alternativeName>
</protein>
<accession>Q3JXA9</accession>
<reference key="1">
    <citation type="journal article" date="2010" name="Genome Biol. Evol.">
        <title>Continuing evolution of Burkholderia mallei through genome reduction and large-scale rearrangements.</title>
        <authorList>
            <person name="Losada L."/>
            <person name="Ronning C.M."/>
            <person name="DeShazer D."/>
            <person name="Woods D."/>
            <person name="Fedorova N."/>
            <person name="Kim H.S."/>
            <person name="Shabalina S.A."/>
            <person name="Pearson T.R."/>
            <person name="Brinkac L."/>
            <person name="Tan P."/>
            <person name="Nandi T."/>
            <person name="Crabtree J."/>
            <person name="Badger J."/>
            <person name="Beckstrom-Sternberg S."/>
            <person name="Saqib M."/>
            <person name="Schutzer S.E."/>
            <person name="Keim P."/>
            <person name="Nierman W.C."/>
        </authorList>
    </citation>
    <scope>NUCLEOTIDE SEQUENCE [LARGE SCALE GENOMIC DNA]</scope>
    <source>
        <strain>1710b</strain>
    </source>
</reference>
<feature type="chain" id="PRO_0000264687" description="Acetylglutamate kinase">
    <location>
        <begin position="1"/>
        <end position="299"/>
    </location>
</feature>
<feature type="binding site" evidence="1">
    <location>
        <begin position="72"/>
        <end position="73"/>
    </location>
    <ligand>
        <name>substrate</name>
    </ligand>
</feature>
<feature type="binding site" evidence="1">
    <location>
        <position position="94"/>
    </location>
    <ligand>
        <name>substrate</name>
    </ligand>
</feature>
<feature type="binding site" evidence="1">
    <location>
        <position position="196"/>
    </location>
    <ligand>
        <name>substrate</name>
    </ligand>
</feature>
<feature type="site" description="Transition state stabilizer" evidence="1">
    <location>
        <position position="37"/>
    </location>
</feature>
<feature type="site" description="Transition state stabilizer" evidence="1">
    <location>
        <position position="256"/>
    </location>
</feature>
<keyword id="KW-0028">Amino-acid biosynthesis</keyword>
<keyword id="KW-0055">Arginine biosynthesis</keyword>
<keyword id="KW-0067">ATP-binding</keyword>
<keyword id="KW-0963">Cytoplasm</keyword>
<keyword id="KW-0418">Kinase</keyword>
<keyword id="KW-0547">Nucleotide-binding</keyword>
<keyword id="KW-0808">Transferase</keyword>
<organism>
    <name type="scientific">Burkholderia pseudomallei (strain 1710b)</name>
    <dbReference type="NCBI Taxonomy" id="320372"/>
    <lineage>
        <taxon>Bacteria</taxon>
        <taxon>Pseudomonadati</taxon>
        <taxon>Pseudomonadota</taxon>
        <taxon>Betaproteobacteria</taxon>
        <taxon>Burkholderiales</taxon>
        <taxon>Burkholderiaceae</taxon>
        <taxon>Burkholderia</taxon>
        <taxon>pseudomallei group</taxon>
    </lineage>
</organism>